<proteinExistence type="inferred from homology"/>
<dbReference type="EMBL" id="HG970334">
    <property type="protein sequence ID" value="CEF86602.1"/>
    <property type="molecule type" value="Genomic_DNA"/>
</dbReference>
<dbReference type="RefSeq" id="XP_011323641.1">
    <property type="nucleotide sequence ID" value="XM_011325339.1"/>
</dbReference>
<dbReference type="SMR" id="I1RMF2"/>
<dbReference type="FunCoup" id="I1RMF2">
    <property type="interactions" value="940"/>
</dbReference>
<dbReference type="STRING" id="229533.I1RMF2"/>
<dbReference type="KEGG" id="fgr:FGSG_05141"/>
<dbReference type="VEuPathDB" id="FungiDB:FGRAMPH1_01G17199"/>
<dbReference type="eggNOG" id="KOG0394">
    <property type="taxonomic scope" value="Eukaryota"/>
</dbReference>
<dbReference type="HOGENOM" id="CLU_041217_10_6_1"/>
<dbReference type="InParanoid" id="I1RMF2"/>
<dbReference type="OrthoDB" id="49775at110618"/>
<dbReference type="Proteomes" id="UP000070720">
    <property type="component" value="Chromosome 3"/>
</dbReference>
<dbReference type="GO" id="GO:0000329">
    <property type="term" value="C:fungal-type vacuole membrane"/>
    <property type="evidence" value="ECO:0007669"/>
    <property type="project" value="TreeGrafter"/>
</dbReference>
<dbReference type="GO" id="GO:0031902">
    <property type="term" value="C:late endosome membrane"/>
    <property type="evidence" value="ECO:0007669"/>
    <property type="project" value="UniProtKB-SubCell"/>
</dbReference>
<dbReference type="GO" id="GO:0005525">
    <property type="term" value="F:GTP binding"/>
    <property type="evidence" value="ECO:0007669"/>
    <property type="project" value="UniProtKB-KW"/>
</dbReference>
<dbReference type="GO" id="GO:0003924">
    <property type="term" value="F:GTPase activity"/>
    <property type="evidence" value="ECO:0007669"/>
    <property type="project" value="InterPro"/>
</dbReference>
<dbReference type="GO" id="GO:0032889">
    <property type="term" value="P:regulation of vacuole fusion, non-autophagic"/>
    <property type="evidence" value="ECO:0007669"/>
    <property type="project" value="TreeGrafter"/>
</dbReference>
<dbReference type="CDD" id="cd01862">
    <property type="entry name" value="Rab7"/>
    <property type="match status" value="1"/>
</dbReference>
<dbReference type="FunFam" id="3.40.50.300:FF:000086">
    <property type="entry name" value="Ras-related small GTPase"/>
    <property type="match status" value="1"/>
</dbReference>
<dbReference type="Gene3D" id="3.40.50.300">
    <property type="entry name" value="P-loop containing nucleotide triphosphate hydrolases"/>
    <property type="match status" value="1"/>
</dbReference>
<dbReference type="InterPro" id="IPR027417">
    <property type="entry name" value="P-loop_NTPase"/>
</dbReference>
<dbReference type="InterPro" id="IPR005225">
    <property type="entry name" value="Small_GTP-bd"/>
</dbReference>
<dbReference type="InterPro" id="IPR001806">
    <property type="entry name" value="Small_GTPase"/>
</dbReference>
<dbReference type="NCBIfam" id="TIGR00231">
    <property type="entry name" value="small_GTP"/>
    <property type="match status" value="1"/>
</dbReference>
<dbReference type="PANTHER" id="PTHR47981">
    <property type="entry name" value="RAB FAMILY"/>
    <property type="match status" value="1"/>
</dbReference>
<dbReference type="PANTHER" id="PTHR47981:SF20">
    <property type="entry name" value="RAS-RELATED PROTEIN RAB-7A"/>
    <property type="match status" value="1"/>
</dbReference>
<dbReference type="Pfam" id="PF00071">
    <property type="entry name" value="Ras"/>
    <property type="match status" value="1"/>
</dbReference>
<dbReference type="PRINTS" id="PR00449">
    <property type="entry name" value="RASTRNSFRMNG"/>
</dbReference>
<dbReference type="SMART" id="SM00175">
    <property type="entry name" value="RAB"/>
    <property type="match status" value="1"/>
</dbReference>
<dbReference type="SMART" id="SM00176">
    <property type="entry name" value="RAN"/>
    <property type="match status" value="1"/>
</dbReference>
<dbReference type="SMART" id="SM00173">
    <property type="entry name" value="RAS"/>
    <property type="match status" value="1"/>
</dbReference>
<dbReference type="SMART" id="SM00174">
    <property type="entry name" value="RHO"/>
    <property type="match status" value="1"/>
</dbReference>
<dbReference type="SUPFAM" id="SSF52540">
    <property type="entry name" value="P-loop containing nucleoside triphosphate hydrolases"/>
    <property type="match status" value="1"/>
</dbReference>
<dbReference type="PROSITE" id="PS51419">
    <property type="entry name" value="RAB"/>
    <property type="match status" value="1"/>
</dbReference>
<organism>
    <name type="scientific">Gibberella zeae (strain ATCC MYA-4620 / CBS 123657 / FGSC 9075 / NRRL 31084 / PH-1)</name>
    <name type="common">Wheat head blight fungus</name>
    <name type="synonym">Fusarium graminearum</name>
    <dbReference type="NCBI Taxonomy" id="229533"/>
    <lineage>
        <taxon>Eukaryota</taxon>
        <taxon>Fungi</taxon>
        <taxon>Dikarya</taxon>
        <taxon>Ascomycota</taxon>
        <taxon>Pezizomycotina</taxon>
        <taxon>Sordariomycetes</taxon>
        <taxon>Hypocreomycetidae</taxon>
        <taxon>Hypocreales</taxon>
        <taxon>Nectriaceae</taxon>
        <taxon>Fusarium</taxon>
    </lineage>
</organism>
<name>RAB7_GIBZE</name>
<comment type="function">
    <text evidence="1 3 4">Ypt/Rab-type GTPases are key regulators of membrane trafficking and intracellular vesicular transport. They act as molecular switches that convert between GTP-bound and GDP-bound states, and regulate virtually all steps of membrane traffic from the formation of the transport vesicle at the donor membrane to its fusion at the target membrane. In the GDP-bound state, Ypt proteins are predominantly cytosolic, solubilized through the interaction with a GDP dissociation inhibitor (GDI). In the GTP-bound state, the proteins are membrane bound and interact with specific effector proteins that select cargo, promote vesicle movement, or verify the correct site of fusion (By similarity). RAB7 regulates the fusion of vacuoles and autophagosomes (PubMed:26177389). Required for ATG9 trafficking (PubMed:30044782).</text>
</comment>
<comment type="activity regulation">
    <text evidence="1">Alternates between an inactive form bound to GDP and an active form bound to GTP. Activated by guanine nucleotide-exchange factors (GEFs), and inactivated by GTPase-activating proteins (GAPs).</text>
</comment>
<comment type="subcellular location">
    <subcellularLocation>
        <location evidence="4">Late endosome membrane</location>
        <topology evidence="5">Lipid-anchor</topology>
    </subcellularLocation>
    <subcellularLocation>
        <location evidence="3">Vacuole membrane</location>
        <topology evidence="5">Lipid-anchor</topology>
    </subcellularLocation>
</comment>
<comment type="similarity">
    <text evidence="5">Belongs to the small GTPase superfamily. Rab family.</text>
</comment>
<sequence length="205" mass="23017">MSSRKKVLLKVIILGDSGVGKTSLMNQYVNKKFSASYKATIGADFLTREVLVDDRQVTMQLWDTAGQERFQSLGVAFYRGADCCVLVYDVNNAKSFEALDSWRDEFLIQASPRDPPNFPFVVLGNKIDVEESKRVISNKRAMTFCQSKGDIPYFETSAKEAINIDQAFEVIARNALAQEESEEFSGDFDDPINIHIENDRDGCAC</sequence>
<feature type="chain" id="PRO_0000451055" description="Ypt/Rab-type GTPase Rab7">
    <location>
        <begin position="1"/>
        <end position="205"/>
    </location>
</feature>
<feature type="short sequence motif" description="Effector region" evidence="1">
    <location>
        <begin position="37"/>
        <end position="45"/>
    </location>
</feature>
<feature type="binding site" evidence="1">
    <location>
        <begin position="17"/>
        <end position="23"/>
    </location>
    <ligand>
        <name>GTP</name>
        <dbReference type="ChEBI" id="CHEBI:37565"/>
    </ligand>
</feature>
<feature type="binding site" evidence="1">
    <location>
        <begin position="33"/>
        <end position="40"/>
    </location>
    <ligand>
        <name>GTP</name>
        <dbReference type="ChEBI" id="CHEBI:37565"/>
    </ligand>
</feature>
<feature type="binding site" evidence="1">
    <location>
        <position position="66"/>
    </location>
    <ligand>
        <name>GTP</name>
        <dbReference type="ChEBI" id="CHEBI:37565"/>
    </ligand>
</feature>
<feature type="binding site" evidence="1">
    <location>
        <begin position="125"/>
        <end position="128"/>
    </location>
    <ligand>
        <name>GTP</name>
        <dbReference type="ChEBI" id="CHEBI:37565"/>
    </ligand>
</feature>
<feature type="binding site" evidence="1">
    <location>
        <begin position="157"/>
        <end position="159"/>
    </location>
    <ligand>
        <name>GTP</name>
        <dbReference type="ChEBI" id="CHEBI:37565"/>
    </ligand>
</feature>
<feature type="modified residue" description="Cysteine methyl ester" evidence="2">
    <location>
        <position position="205"/>
    </location>
</feature>
<feature type="lipid moiety-binding region" description="S-geranylgeranyl cysteine" evidence="2">
    <location>
        <position position="203"/>
    </location>
</feature>
<feature type="lipid moiety-binding region" description="S-geranylgeranyl cysteine" evidence="2">
    <location>
        <position position="205"/>
    </location>
</feature>
<accession>I1RMF2</accession>
<keyword id="KW-0967">Endosome</keyword>
<keyword id="KW-0342">GTP-binding</keyword>
<keyword id="KW-0449">Lipoprotein</keyword>
<keyword id="KW-0472">Membrane</keyword>
<keyword id="KW-0488">Methylation</keyword>
<keyword id="KW-0547">Nucleotide-binding</keyword>
<keyword id="KW-0636">Prenylation</keyword>
<keyword id="KW-1185">Reference proteome</keyword>
<keyword id="KW-0926">Vacuole</keyword>
<gene>
    <name type="primary">RAB7</name>
    <name type="ORF">FG05141.1</name>
    <name type="ORF">FGRAMPH1_01T17199</name>
</gene>
<reference key="1">
    <citation type="journal article" date="2007" name="Science">
        <title>The Fusarium graminearum genome reveals a link between localized polymorphism and pathogen specialization.</title>
        <authorList>
            <person name="Cuomo C.A."/>
            <person name="Gueldener U."/>
            <person name="Xu J.-R."/>
            <person name="Trail F."/>
            <person name="Turgeon B.G."/>
            <person name="Di Pietro A."/>
            <person name="Walton J.D."/>
            <person name="Ma L.-J."/>
            <person name="Baker S.E."/>
            <person name="Rep M."/>
            <person name="Adam G."/>
            <person name="Antoniw J."/>
            <person name="Baldwin T."/>
            <person name="Calvo S.E."/>
            <person name="Chang Y.-L."/>
            <person name="DeCaprio D."/>
            <person name="Gale L.R."/>
            <person name="Gnerre S."/>
            <person name="Goswami R.S."/>
            <person name="Hammond-Kosack K."/>
            <person name="Harris L.J."/>
            <person name="Hilburn K."/>
            <person name="Kennell J.C."/>
            <person name="Kroken S."/>
            <person name="Magnuson J.K."/>
            <person name="Mannhaupt G."/>
            <person name="Mauceli E.W."/>
            <person name="Mewes H.-W."/>
            <person name="Mitterbauer R."/>
            <person name="Muehlbauer G."/>
            <person name="Muensterkoetter M."/>
            <person name="Nelson D."/>
            <person name="O'Donnell K."/>
            <person name="Ouellet T."/>
            <person name="Qi W."/>
            <person name="Quesneville H."/>
            <person name="Roncero M.I.G."/>
            <person name="Seong K.-Y."/>
            <person name="Tetko I.V."/>
            <person name="Urban M."/>
            <person name="Waalwijk C."/>
            <person name="Ward T.J."/>
            <person name="Yao J."/>
            <person name="Birren B.W."/>
            <person name="Kistler H.C."/>
        </authorList>
    </citation>
    <scope>NUCLEOTIDE SEQUENCE [LARGE SCALE GENOMIC DNA]</scope>
    <source>
        <strain>ATCC MYA-4620 / CBS 123657 / FGSC 9075 / NRRL 31084 / PH-1</strain>
    </source>
</reference>
<reference key="2">
    <citation type="journal article" date="2010" name="Nature">
        <title>Comparative genomics reveals mobile pathogenicity chromosomes in Fusarium.</title>
        <authorList>
            <person name="Ma L.-J."/>
            <person name="van der Does H.C."/>
            <person name="Borkovich K.A."/>
            <person name="Coleman J.J."/>
            <person name="Daboussi M.-J."/>
            <person name="Di Pietro A."/>
            <person name="Dufresne M."/>
            <person name="Freitag M."/>
            <person name="Grabherr M."/>
            <person name="Henrissat B."/>
            <person name="Houterman P.M."/>
            <person name="Kang S."/>
            <person name="Shim W.-B."/>
            <person name="Woloshuk C."/>
            <person name="Xie X."/>
            <person name="Xu J.-R."/>
            <person name="Antoniw J."/>
            <person name="Baker S.E."/>
            <person name="Bluhm B.H."/>
            <person name="Breakspear A."/>
            <person name="Brown D.W."/>
            <person name="Butchko R.A.E."/>
            <person name="Chapman S."/>
            <person name="Coulson R."/>
            <person name="Coutinho P.M."/>
            <person name="Danchin E.G.J."/>
            <person name="Diener A."/>
            <person name="Gale L.R."/>
            <person name="Gardiner D.M."/>
            <person name="Goff S."/>
            <person name="Hammond-Kosack K.E."/>
            <person name="Hilburn K."/>
            <person name="Hua-Van A."/>
            <person name="Jonkers W."/>
            <person name="Kazan K."/>
            <person name="Kodira C.D."/>
            <person name="Koehrsen M."/>
            <person name="Kumar L."/>
            <person name="Lee Y.-H."/>
            <person name="Li L."/>
            <person name="Manners J.M."/>
            <person name="Miranda-Saavedra D."/>
            <person name="Mukherjee M."/>
            <person name="Park G."/>
            <person name="Park J."/>
            <person name="Park S.-Y."/>
            <person name="Proctor R.H."/>
            <person name="Regev A."/>
            <person name="Ruiz-Roldan M.C."/>
            <person name="Sain D."/>
            <person name="Sakthikumar S."/>
            <person name="Sykes S."/>
            <person name="Schwartz D.C."/>
            <person name="Turgeon B.G."/>
            <person name="Wapinski I."/>
            <person name="Yoder O."/>
            <person name="Young S."/>
            <person name="Zeng Q."/>
            <person name="Zhou S."/>
            <person name="Galagan J."/>
            <person name="Cuomo C.A."/>
            <person name="Kistler H.C."/>
            <person name="Rep M."/>
        </authorList>
    </citation>
    <scope>GENOME REANNOTATION</scope>
    <source>
        <strain>ATCC MYA-4620 / CBS 123657 / FGSC 9075 / NRRL 31084 / PH-1</strain>
    </source>
</reference>
<reference key="3">
    <citation type="journal article" date="2015" name="BMC Genomics">
        <title>The completed genome sequence of the pathogenic ascomycete fungus Fusarium graminearum.</title>
        <authorList>
            <person name="King R."/>
            <person name="Urban M."/>
            <person name="Hammond-Kosack M.C.U."/>
            <person name="Hassani-Pak K."/>
            <person name="Hammond-Kosack K.E."/>
        </authorList>
    </citation>
    <scope>NUCLEOTIDE SEQUENCE [LARGE SCALE GENOMIC DNA]</scope>
    <source>
        <strain>ATCC MYA-4620 / CBS 123657 / FGSC 9075 / NRRL 31084 / PH-1</strain>
    </source>
</reference>
<reference key="4">
    <citation type="journal article" date="2015" name="Environ. Microbiol.">
        <title>Rab GTPases are essential for membrane trafficking-dependent growth and pathogenicity in Fusarium graminearum.</title>
        <authorList>
            <person name="Zheng H."/>
            <person name="Zheng W."/>
            <person name="Wu C."/>
            <person name="Yang J."/>
            <person name="Xi Y."/>
            <person name="Xie Q."/>
            <person name="Zhao X."/>
            <person name="Deng X."/>
            <person name="Lu G."/>
            <person name="Li G."/>
            <person name="Ebbole D."/>
            <person name="Zhou J."/>
            <person name="Wang Z."/>
        </authorList>
    </citation>
    <scope>FUNCTION</scope>
    <scope>SUBCELLULAR LOCATION</scope>
</reference>
<reference key="5">
    <citation type="journal article" date="2018" name="PLoS Genet.">
        <title>Small GTPase Rab7-mediated FgAtg9 trafficking is essential for autophagy-dependent development and pathogenicity in Fusarium graminearum.</title>
        <authorList>
            <person name="Zheng H."/>
            <person name="Miao P."/>
            <person name="Lin X."/>
            <person name="Li L."/>
            <person name="Wu C."/>
            <person name="Chen X."/>
            <person name="Abubakar Y.S."/>
            <person name="Norvienyeku J."/>
            <person name="Li G."/>
            <person name="Zhou J."/>
            <person name="Wang Z."/>
            <person name="Zheng W."/>
        </authorList>
    </citation>
    <scope>FUNCTION</scope>
    <scope>SUBCELLULAR LOCATION</scope>
</reference>
<protein>
    <recommendedName>
        <fullName>Ypt/Rab-type GTPase Rab7</fullName>
    </recommendedName>
</protein>
<evidence type="ECO:0000250" key="1">
    <source>
        <dbReference type="UniProtKB" id="P32939"/>
    </source>
</evidence>
<evidence type="ECO:0000250" key="2">
    <source>
        <dbReference type="UniProtKB" id="P36586"/>
    </source>
</evidence>
<evidence type="ECO:0000269" key="3">
    <source>
    </source>
</evidence>
<evidence type="ECO:0000269" key="4">
    <source>
    </source>
</evidence>
<evidence type="ECO:0000305" key="5"/>